<sequence length="338" mass="35103">MAGSHPYLNPPDSTHPSPPSAPPSLRWHQCCQPSDATNGLLVALLGGGLPAGFVGPLSHMAYQASNLPSLELLICRCLFHLPIALLLKLRGDPLLGPPDIRGRAYFYALLNVLSIGCAYSAVQVVPAGNAATVRKGSSTVCSAVLTLCLESQGLSGYDWCGLLGSILGLIIIVGPGLWTLQEGITGVYTALGYGQAFVGGLALSLGLLVYRSLHFPSCLPTVAFLSGLVGLLGSVPGLFVLQPPVLPSDLPSWSCVGAVGILALVSFTCVSYAVTKAHPALVCAVLHSEVVVALILQYYMLHETVAPSDIVGAGVVLGSIAIITAWNLSCEREGKVEE</sequence>
<feature type="chain" id="PRO_0000342676" description="Solute carrier family 35 member G6">
    <location>
        <begin position="1"/>
        <end position="338"/>
    </location>
</feature>
<feature type="transmembrane region" description="Helical" evidence="1">
    <location>
        <begin position="40"/>
        <end position="60"/>
    </location>
</feature>
<feature type="transmembrane region" description="Helical" evidence="1">
    <location>
        <begin position="67"/>
        <end position="87"/>
    </location>
</feature>
<feature type="transmembrane region" description="Helical" evidence="1">
    <location>
        <begin position="105"/>
        <end position="125"/>
    </location>
</feature>
<feature type="transmembrane region" description="Helical" evidence="1">
    <location>
        <begin position="160"/>
        <end position="180"/>
    </location>
</feature>
<feature type="transmembrane region" description="Helical" evidence="1">
    <location>
        <begin position="190"/>
        <end position="210"/>
    </location>
</feature>
<feature type="transmembrane region" description="Helical" evidence="1">
    <location>
        <begin position="221"/>
        <end position="241"/>
    </location>
</feature>
<feature type="transmembrane region" description="Helical" evidence="1">
    <location>
        <begin position="255"/>
        <end position="275"/>
    </location>
</feature>
<feature type="transmembrane region" description="Helical" evidence="1">
    <location>
        <begin position="281"/>
        <end position="301"/>
    </location>
</feature>
<feature type="transmembrane region" description="Helical" evidence="1">
    <location>
        <begin position="310"/>
        <end position="330"/>
    </location>
</feature>
<feature type="domain" description="EamA 1">
    <location>
        <begin position="49"/>
        <end position="174"/>
    </location>
</feature>
<feature type="domain" description="EamA 2">
    <location>
        <begin position="272"/>
        <end position="325"/>
    </location>
</feature>
<feature type="region of interest" description="Disordered" evidence="2">
    <location>
        <begin position="1"/>
        <end position="25"/>
    </location>
</feature>
<feature type="sequence variant" id="VAR_044335" description="In dbSNP:rs3760422.">
    <original>A</original>
    <variation>T</variation>
    <location>
        <position position="51"/>
    </location>
</feature>
<feature type="sequence variant" id="VAR_044336" description="In dbSNP:rs4491591.">
    <original>P</original>
    <variation>L</variation>
    <location>
        <position position="251"/>
    </location>
</feature>
<feature type="sequence variant" id="VAR_059581" description="In dbSNP:rs7209977.">
    <original>A</original>
    <variation>T</variation>
    <location>
        <position position="263"/>
    </location>
</feature>
<proteinExistence type="evidence at transcript level"/>
<evidence type="ECO:0000255" key="1"/>
<evidence type="ECO:0000256" key="2">
    <source>
        <dbReference type="SAM" id="MobiDB-lite"/>
    </source>
</evidence>
<evidence type="ECO:0000269" key="3">
    <source>
    </source>
</evidence>
<evidence type="ECO:0000305" key="4"/>
<accession>P0C7Q6</accession>
<protein>
    <recommendedName>
        <fullName>Solute carrier family 35 member G6</fullName>
    </recommendedName>
    <alternativeName>
        <fullName>Acyl-malonyl-condensing enzyme 1-like protein 3</fullName>
    </alternativeName>
    <alternativeName>
        <fullName>Transmembrane protein 21B</fullName>
    </alternativeName>
</protein>
<dbReference type="EMBL" id="AC113189">
    <property type="status" value="NOT_ANNOTATED_CDS"/>
    <property type="molecule type" value="Genomic_DNA"/>
</dbReference>
<dbReference type="CCDS" id="CCDS45603.1"/>
<dbReference type="RefSeq" id="NP_001096084.1">
    <property type="nucleotide sequence ID" value="NM_001102614.2"/>
</dbReference>
<dbReference type="SMR" id="P0C7Q6"/>
<dbReference type="STRING" id="9606.ENSP00000396523"/>
<dbReference type="TCDB" id="2.A.7.28.6">
    <property type="family name" value="the drug/metabolite transporter (dmt) superfamily"/>
</dbReference>
<dbReference type="iPTMnet" id="P0C7Q6"/>
<dbReference type="PhosphoSitePlus" id="P0C7Q6"/>
<dbReference type="BioMuta" id="SLC35G6"/>
<dbReference type="DMDM" id="193806690"/>
<dbReference type="PaxDb" id="9606-ENSP00000396523"/>
<dbReference type="Antibodypedia" id="82013">
    <property type="antibodies" value="1 antibodies from 1 providers"/>
</dbReference>
<dbReference type="DNASU" id="643664"/>
<dbReference type="Ensembl" id="ENST00000412468.4">
    <property type="protein sequence ID" value="ENSP00000396523.2"/>
    <property type="gene ID" value="ENSG00000259224.3"/>
</dbReference>
<dbReference type="Ensembl" id="ENST00000639889.1">
    <property type="protein sequence ID" value="ENSP00000491424.1"/>
    <property type="gene ID" value="ENSG00000284515.1"/>
</dbReference>
<dbReference type="GeneID" id="643664"/>
<dbReference type="KEGG" id="hsa:643664"/>
<dbReference type="MANE-Select" id="ENST00000412468.4">
    <property type="protein sequence ID" value="ENSP00000396523.2"/>
    <property type="RefSeq nucleotide sequence ID" value="NM_001102614.2"/>
    <property type="RefSeq protein sequence ID" value="NP_001096084.1"/>
</dbReference>
<dbReference type="UCSC" id="uc010cmj.2">
    <property type="organism name" value="human"/>
</dbReference>
<dbReference type="AGR" id="HGNC:31351"/>
<dbReference type="CTD" id="643664"/>
<dbReference type="DisGeNET" id="643664"/>
<dbReference type="GeneCards" id="SLC35G6"/>
<dbReference type="HGNC" id="HGNC:31351">
    <property type="gene designation" value="SLC35G6"/>
</dbReference>
<dbReference type="HPA" id="ENSG00000259224">
    <property type="expression patterns" value="Tissue enriched (testis)"/>
</dbReference>
<dbReference type="neXtProt" id="NX_P0C7Q6"/>
<dbReference type="PharmGKB" id="PA134919830"/>
<dbReference type="VEuPathDB" id="HostDB:ENSG00000259224"/>
<dbReference type="eggNOG" id="ENOG502RCFC">
    <property type="taxonomic scope" value="Eukaryota"/>
</dbReference>
<dbReference type="GeneTree" id="ENSGT00940000153249"/>
<dbReference type="HOGENOM" id="CLU_055637_0_0_1"/>
<dbReference type="InParanoid" id="P0C7Q6"/>
<dbReference type="OMA" id="LPWHQRC"/>
<dbReference type="OrthoDB" id="306876at2759"/>
<dbReference type="PAN-GO" id="P0C7Q6">
    <property type="GO annotations" value="1 GO annotation based on evolutionary models"/>
</dbReference>
<dbReference type="PhylomeDB" id="P0C7Q6"/>
<dbReference type="TreeFam" id="TF331838"/>
<dbReference type="PathwayCommons" id="P0C7Q6"/>
<dbReference type="SignaLink" id="P0C7Q6"/>
<dbReference type="BioGRID-ORCS" id="643664">
    <property type="hits" value="134 hits in 1047 CRISPR screens"/>
</dbReference>
<dbReference type="GenomeRNAi" id="643664"/>
<dbReference type="Pharos" id="P0C7Q6">
    <property type="development level" value="Tdark"/>
</dbReference>
<dbReference type="PRO" id="PR:P0C7Q6"/>
<dbReference type="Proteomes" id="UP000005640">
    <property type="component" value="Chromosome 17"/>
</dbReference>
<dbReference type="RNAct" id="P0C7Q6">
    <property type="molecule type" value="protein"/>
</dbReference>
<dbReference type="Bgee" id="ENSG00000259224">
    <property type="expression patterns" value="Expressed in male germ line stem cell (sensu Vertebrata) in testis and 19 other cell types or tissues"/>
</dbReference>
<dbReference type="GO" id="GO:0016020">
    <property type="term" value="C:membrane"/>
    <property type="evidence" value="ECO:0000318"/>
    <property type="project" value="GO_Central"/>
</dbReference>
<dbReference type="InterPro" id="IPR000620">
    <property type="entry name" value="EamA_dom"/>
</dbReference>
<dbReference type="PANTHER" id="PTHR22911">
    <property type="entry name" value="ACYL-MALONYL CONDENSING ENZYME-RELATED"/>
    <property type="match status" value="1"/>
</dbReference>
<dbReference type="PANTHER" id="PTHR22911:SF110">
    <property type="entry name" value="SOLUTE CARRIER FAMILY 35 MEMBER G3-RELATED"/>
    <property type="match status" value="1"/>
</dbReference>
<dbReference type="Pfam" id="PF00892">
    <property type="entry name" value="EamA"/>
    <property type="match status" value="2"/>
</dbReference>
<dbReference type="SUPFAM" id="SSF103481">
    <property type="entry name" value="Multidrug resistance efflux transporter EmrE"/>
    <property type="match status" value="2"/>
</dbReference>
<reference key="1">
    <citation type="journal article" date="2006" name="Nature">
        <title>DNA sequence of human chromosome 17 and analysis of rearrangement in the human lineage.</title>
        <authorList>
            <person name="Zody M.C."/>
            <person name="Garber M."/>
            <person name="Adams D.J."/>
            <person name="Sharpe T."/>
            <person name="Harrow J."/>
            <person name="Lupski J.R."/>
            <person name="Nicholson C."/>
            <person name="Searle S.M."/>
            <person name="Wilming L."/>
            <person name="Young S.K."/>
            <person name="Abouelleil A."/>
            <person name="Allen N.R."/>
            <person name="Bi W."/>
            <person name="Bloom T."/>
            <person name="Borowsky M.L."/>
            <person name="Bugalter B.E."/>
            <person name="Butler J."/>
            <person name="Chang J.L."/>
            <person name="Chen C.-K."/>
            <person name="Cook A."/>
            <person name="Corum B."/>
            <person name="Cuomo C.A."/>
            <person name="de Jong P.J."/>
            <person name="DeCaprio D."/>
            <person name="Dewar K."/>
            <person name="FitzGerald M."/>
            <person name="Gilbert J."/>
            <person name="Gibson R."/>
            <person name="Gnerre S."/>
            <person name="Goldstein S."/>
            <person name="Grafham D.V."/>
            <person name="Grocock R."/>
            <person name="Hafez N."/>
            <person name="Hagopian D.S."/>
            <person name="Hart E."/>
            <person name="Norman C.H."/>
            <person name="Humphray S."/>
            <person name="Jaffe D.B."/>
            <person name="Jones M."/>
            <person name="Kamal M."/>
            <person name="Khodiyar V.K."/>
            <person name="LaButti K."/>
            <person name="Laird G."/>
            <person name="Lehoczky J."/>
            <person name="Liu X."/>
            <person name="Lokyitsang T."/>
            <person name="Loveland J."/>
            <person name="Lui A."/>
            <person name="Macdonald P."/>
            <person name="Major J.E."/>
            <person name="Matthews L."/>
            <person name="Mauceli E."/>
            <person name="McCarroll S.A."/>
            <person name="Mihalev A.H."/>
            <person name="Mudge J."/>
            <person name="Nguyen C."/>
            <person name="Nicol R."/>
            <person name="O'Leary S.B."/>
            <person name="Osoegawa K."/>
            <person name="Schwartz D.C."/>
            <person name="Shaw-Smith C."/>
            <person name="Stankiewicz P."/>
            <person name="Steward C."/>
            <person name="Swarbreck D."/>
            <person name="Venkataraman V."/>
            <person name="Whittaker C.A."/>
            <person name="Yang X."/>
            <person name="Zimmer A.R."/>
            <person name="Bradley A."/>
            <person name="Hubbard T."/>
            <person name="Birren B.W."/>
            <person name="Rogers J."/>
            <person name="Lander E.S."/>
            <person name="Nusbaum C."/>
        </authorList>
    </citation>
    <scope>NUCLEOTIDE SEQUENCE [LARGE SCALE GENOMIC DNA]</scope>
</reference>
<reference key="2">
    <citation type="journal article" date="2006" name="Proc. Natl. Acad. Sci. U.S.A.">
        <title>Emergence of primate genes by retrotransposon-mediated sequence transduction.</title>
        <authorList>
            <person name="Xing J."/>
            <person name="Wang H."/>
            <person name="Belancio V.P."/>
            <person name="Cordaux R."/>
            <person name="Deininger P.L."/>
            <person name="Batzer M.A."/>
        </authorList>
    </citation>
    <scope>TISSUE SPECIFICITY</scope>
    <scope>GENE EVOLUTION</scope>
</reference>
<keyword id="KW-0472">Membrane</keyword>
<keyword id="KW-1185">Reference proteome</keyword>
<keyword id="KW-0677">Repeat</keyword>
<keyword id="KW-0812">Transmembrane</keyword>
<keyword id="KW-1133">Transmembrane helix</keyword>
<gene>
    <name type="primary">SLC35G6</name>
    <name type="synonym">AMAC1L3</name>
    <name type="synonym">TMEM21B</name>
</gene>
<name>S35G6_HUMAN</name>
<comment type="subcellular location">
    <subcellularLocation>
        <location evidence="4">Membrane</location>
        <topology evidence="4">Multi-pass membrane protein</topology>
    </subcellularLocation>
</comment>
<comment type="tissue specificity">
    <text evidence="3">Expressed in placenta and testis.</text>
</comment>
<comment type="miscellaneous">
    <text>This gene appears to be the source locus of an SVA-mediated retrotransposition event that gave rise to SLC35G3, SLC35G4 and SLC35G5 genes.</text>
</comment>
<comment type="similarity">
    <text evidence="4">Belongs to the SLC35G solute transporter family.</text>
</comment>
<organism>
    <name type="scientific">Homo sapiens</name>
    <name type="common">Human</name>
    <dbReference type="NCBI Taxonomy" id="9606"/>
    <lineage>
        <taxon>Eukaryota</taxon>
        <taxon>Metazoa</taxon>
        <taxon>Chordata</taxon>
        <taxon>Craniata</taxon>
        <taxon>Vertebrata</taxon>
        <taxon>Euteleostomi</taxon>
        <taxon>Mammalia</taxon>
        <taxon>Eutheria</taxon>
        <taxon>Euarchontoglires</taxon>
        <taxon>Primates</taxon>
        <taxon>Haplorrhini</taxon>
        <taxon>Catarrhini</taxon>
        <taxon>Hominidae</taxon>
        <taxon>Homo</taxon>
    </lineage>
</organism>